<gene>
    <name type="ORF">SPCC1281.03c</name>
</gene>
<proteinExistence type="inferred from homology"/>
<protein>
    <recommendedName>
        <fullName>ER membrane protein complex subunit 4</fullName>
    </recommendedName>
</protein>
<name>YQ13_SCHPO</name>
<sequence>MHINEETDWIDLVKPALAKKPKKIVDNSDKFPTPRGFQQKSLVSKNIHSGNSASSTSIFAKREEELQKDLLLKKAWELAYSPLKQIPMNAILAYMSGNSLQIFSIMTTLMLLVNPLKAITSTGSAFTPFKGTHPGTLWPAMGAYILFQLLLMGIGVYKLQRMGLLPTTTSDWLAWEVSKVFMDRSYGPSKTVL</sequence>
<evidence type="ECO:0000255" key="1"/>
<evidence type="ECO:0000269" key="2">
    <source>
    </source>
</evidence>
<evidence type="ECO:0000305" key="3"/>
<feature type="chain" id="PRO_0000340089" description="ER membrane protein complex subunit 4">
    <location>
        <begin position="1"/>
        <end position="193"/>
    </location>
</feature>
<feature type="transmembrane region" description="Helical" evidence="1">
    <location>
        <begin position="91"/>
        <end position="111"/>
    </location>
</feature>
<feature type="transmembrane region" description="Helical" evidence="1">
    <location>
        <begin position="137"/>
        <end position="157"/>
    </location>
</feature>
<accession>O94520</accession>
<organism>
    <name type="scientific">Schizosaccharomyces pombe (strain 972 / ATCC 24843)</name>
    <name type="common">Fission yeast</name>
    <dbReference type="NCBI Taxonomy" id="284812"/>
    <lineage>
        <taxon>Eukaryota</taxon>
        <taxon>Fungi</taxon>
        <taxon>Dikarya</taxon>
        <taxon>Ascomycota</taxon>
        <taxon>Taphrinomycotina</taxon>
        <taxon>Schizosaccharomycetes</taxon>
        <taxon>Schizosaccharomycetales</taxon>
        <taxon>Schizosaccharomycetaceae</taxon>
        <taxon>Schizosaccharomyces</taxon>
    </lineage>
</organism>
<reference key="1">
    <citation type="journal article" date="2002" name="Nature">
        <title>The genome sequence of Schizosaccharomyces pombe.</title>
        <authorList>
            <person name="Wood V."/>
            <person name="Gwilliam R."/>
            <person name="Rajandream M.A."/>
            <person name="Lyne M.H."/>
            <person name="Lyne R."/>
            <person name="Stewart A."/>
            <person name="Sgouros J.G."/>
            <person name="Peat N."/>
            <person name="Hayles J."/>
            <person name="Baker S.G."/>
            <person name="Basham D."/>
            <person name="Bowman S."/>
            <person name="Brooks K."/>
            <person name="Brown D."/>
            <person name="Brown S."/>
            <person name="Chillingworth T."/>
            <person name="Churcher C.M."/>
            <person name="Collins M."/>
            <person name="Connor R."/>
            <person name="Cronin A."/>
            <person name="Davis P."/>
            <person name="Feltwell T."/>
            <person name="Fraser A."/>
            <person name="Gentles S."/>
            <person name="Goble A."/>
            <person name="Hamlin N."/>
            <person name="Harris D.E."/>
            <person name="Hidalgo J."/>
            <person name="Hodgson G."/>
            <person name="Holroyd S."/>
            <person name="Hornsby T."/>
            <person name="Howarth S."/>
            <person name="Huckle E.J."/>
            <person name="Hunt S."/>
            <person name="Jagels K."/>
            <person name="James K.D."/>
            <person name="Jones L."/>
            <person name="Jones M."/>
            <person name="Leather S."/>
            <person name="McDonald S."/>
            <person name="McLean J."/>
            <person name="Mooney P."/>
            <person name="Moule S."/>
            <person name="Mungall K.L."/>
            <person name="Murphy L.D."/>
            <person name="Niblett D."/>
            <person name="Odell C."/>
            <person name="Oliver K."/>
            <person name="O'Neil S."/>
            <person name="Pearson D."/>
            <person name="Quail M.A."/>
            <person name="Rabbinowitsch E."/>
            <person name="Rutherford K.M."/>
            <person name="Rutter S."/>
            <person name="Saunders D."/>
            <person name="Seeger K."/>
            <person name="Sharp S."/>
            <person name="Skelton J."/>
            <person name="Simmonds M.N."/>
            <person name="Squares R."/>
            <person name="Squares S."/>
            <person name="Stevens K."/>
            <person name="Taylor K."/>
            <person name="Taylor R.G."/>
            <person name="Tivey A."/>
            <person name="Walsh S.V."/>
            <person name="Warren T."/>
            <person name="Whitehead S."/>
            <person name="Woodward J.R."/>
            <person name="Volckaert G."/>
            <person name="Aert R."/>
            <person name="Robben J."/>
            <person name="Grymonprez B."/>
            <person name="Weltjens I."/>
            <person name="Vanstreels E."/>
            <person name="Rieger M."/>
            <person name="Schaefer M."/>
            <person name="Mueller-Auer S."/>
            <person name="Gabel C."/>
            <person name="Fuchs M."/>
            <person name="Duesterhoeft A."/>
            <person name="Fritzc C."/>
            <person name="Holzer E."/>
            <person name="Moestl D."/>
            <person name="Hilbert H."/>
            <person name="Borzym K."/>
            <person name="Langer I."/>
            <person name="Beck A."/>
            <person name="Lehrach H."/>
            <person name="Reinhardt R."/>
            <person name="Pohl T.M."/>
            <person name="Eger P."/>
            <person name="Zimmermann W."/>
            <person name="Wedler H."/>
            <person name="Wambutt R."/>
            <person name="Purnelle B."/>
            <person name="Goffeau A."/>
            <person name="Cadieu E."/>
            <person name="Dreano S."/>
            <person name="Gloux S."/>
            <person name="Lelaure V."/>
            <person name="Mottier S."/>
            <person name="Galibert F."/>
            <person name="Aves S.J."/>
            <person name="Xiang Z."/>
            <person name="Hunt C."/>
            <person name="Moore K."/>
            <person name="Hurst S.M."/>
            <person name="Lucas M."/>
            <person name="Rochet M."/>
            <person name="Gaillardin C."/>
            <person name="Tallada V.A."/>
            <person name="Garzon A."/>
            <person name="Thode G."/>
            <person name="Daga R.R."/>
            <person name="Cruzado L."/>
            <person name="Jimenez J."/>
            <person name="Sanchez M."/>
            <person name="del Rey F."/>
            <person name="Benito J."/>
            <person name="Dominguez A."/>
            <person name="Revuelta J.L."/>
            <person name="Moreno S."/>
            <person name="Armstrong J."/>
            <person name="Forsburg S.L."/>
            <person name="Cerutti L."/>
            <person name="Lowe T."/>
            <person name="McCombie W.R."/>
            <person name="Paulsen I."/>
            <person name="Potashkin J."/>
            <person name="Shpakovski G.V."/>
            <person name="Ussery D."/>
            <person name="Barrell B.G."/>
            <person name="Nurse P."/>
        </authorList>
    </citation>
    <scope>NUCLEOTIDE SEQUENCE [LARGE SCALE GENOMIC DNA]</scope>
    <source>
        <strain>972 / ATCC 24843</strain>
    </source>
</reference>
<reference key="2">
    <citation type="journal article" date="2006" name="Nat. Biotechnol.">
        <title>ORFeome cloning and global analysis of protein localization in the fission yeast Schizosaccharomyces pombe.</title>
        <authorList>
            <person name="Matsuyama A."/>
            <person name="Arai R."/>
            <person name="Yashiroda Y."/>
            <person name="Shirai A."/>
            <person name="Kamata A."/>
            <person name="Sekido S."/>
            <person name="Kobayashi Y."/>
            <person name="Hashimoto A."/>
            <person name="Hamamoto M."/>
            <person name="Hiraoka Y."/>
            <person name="Horinouchi S."/>
            <person name="Yoshida M."/>
        </authorList>
    </citation>
    <scope>SUBCELLULAR LOCATION [LARGE SCALE ANALYSIS]</scope>
</reference>
<comment type="subcellular location">
    <subcellularLocation>
        <location evidence="2">Endoplasmic reticulum membrane</location>
        <topology evidence="2">Multi-pass membrane protein</topology>
    </subcellularLocation>
</comment>
<comment type="similarity">
    <text evidence="3">Belongs to the EMC4 family.</text>
</comment>
<dbReference type="EMBL" id="CU329672">
    <property type="protein sequence ID" value="CAA22824.1"/>
    <property type="molecule type" value="Genomic_DNA"/>
</dbReference>
<dbReference type="PIR" id="T40922">
    <property type="entry name" value="T40922"/>
</dbReference>
<dbReference type="SMR" id="O94520"/>
<dbReference type="BioGRID" id="275647">
    <property type="interactions" value="5"/>
</dbReference>
<dbReference type="FunCoup" id="O94520">
    <property type="interactions" value="366"/>
</dbReference>
<dbReference type="STRING" id="284812.O94520"/>
<dbReference type="iPTMnet" id="O94520"/>
<dbReference type="PaxDb" id="4896-SPCC1281.03c.1"/>
<dbReference type="EnsemblFungi" id="SPCC1281.03c.1">
    <property type="protein sequence ID" value="SPCC1281.03c.1:pep"/>
    <property type="gene ID" value="SPCC1281.03c"/>
</dbReference>
<dbReference type="KEGG" id="spo:2539075"/>
<dbReference type="PomBase" id="SPCC1281.03c"/>
<dbReference type="VEuPathDB" id="FungiDB:SPCC1281.03c"/>
<dbReference type="eggNOG" id="KOG3318">
    <property type="taxonomic scope" value="Eukaryota"/>
</dbReference>
<dbReference type="HOGENOM" id="CLU_098404_2_0_1"/>
<dbReference type="InParanoid" id="O94520"/>
<dbReference type="OMA" id="QQTFKVI"/>
<dbReference type="PhylomeDB" id="O94520"/>
<dbReference type="PRO" id="PR:O94520"/>
<dbReference type="Proteomes" id="UP000002485">
    <property type="component" value="Chromosome III"/>
</dbReference>
<dbReference type="GO" id="GO:0072546">
    <property type="term" value="C:EMC complex"/>
    <property type="evidence" value="ECO:0000318"/>
    <property type="project" value="GO_Central"/>
</dbReference>
<dbReference type="GO" id="GO:0005783">
    <property type="term" value="C:endoplasmic reticulum"/>
    <property type="evidence" value="ECO:0007005"/>
    <property type="project" value="PomBase"/>
</dbReference>
<dbReference type="GO" id="GO:0045048">
    <property type="term" value="P:protein insertion into ER membrane"/>
    <property type="evidence" value="ECO:0000305"/>
    <property type="project" value="PomBase"/>
</dbReference>
<dbReference type="InterPro" id="IPR009445">
    <property type="entry name" value="TMEM85/Emc4"/>
</dbReference>
<dbReference type="PANTHER" id="PTHR19315">
    <property type="entry name" value="ER MEMBRANE PROTEIN COMPLEX SUBUNIT 4"/>
    <property type="match status" value="1"/>
</dbReference>
<dbReference type="Pfam" id="PF06417">
    <property type="entry name" value="EMC4"/>
    <property type="match status" value="1"/>
</dbReference>
<dbReference type="PIRSF" id="PIRSF017207">
    <property type="entry name" value="UCP017207_TM-p85"/>
    <property type="match status" value="1"/>
</dbReference>
<keyword id="KW-0256">Endoplasmic reticulum</keyword>
<keyword id="KW-0472">Membrane</keyword>
<keyword id="KW-1185">Reference proteome</keyword>
<keyword id="KW-0812">Transmembrane</keyword>
<keyword id="KW-1133">Transmembrane helix</keyword>